<reference key="1">
    <citation type="journal article" date="2009" name="PLoS ONE">
        <title>Genome analysis of the anaerobic thermohalophilic bacterium Halothermothrix orenii.</title>
        <authorList>
            <person name="Mavromatis K."/>
            <person name="Ivanova N."/>
            <person name="Anderson I."/>
            <person name="Lykidis A."/>
            <person name="Hooper S.D."/>
            <person name="Sun H."/>
            <person name="Kunin V."/>
            <person name="Lapidus A."/>
            <person name="Hugenholtz P."/>
            <person name="Patel B."/>
            <person name="Kyrpides N.C."/>
        </authorList>
    </citation>
    <scope>NUCLEOTIDE SEQUENCE [LARGE SCALE GENOMIC DNA]</scope>
    <source>
        <strain>H 168 / OCM 544 / DSM 9562</strain>
    </source>
</reference>
<proteinExistence type="inferred from homology"/>
<feature type="chain" id="PRO_1000192133" description="UDP-N-acetylglucosamine--N-acetylmuramyl-(pentapeptide) pyrophosphoryl-undecaprenol N-acetylglucosamine transferase">
    <location>
        <begin position="1"/>
        <end position="371"/>
    </location>
</feature>
<feature type="binding site" evidence="1">
    <location>
        <begin position="10"/>
        <end position="12"/>
    </location>
    <ligand>
        <name>UDP-N-acetyl-alpha-D-glucosamine</name>
        <dbReference type="ChEBI" id="CHEBI:57705"/>
    </ligand>
</feature>
<feature type="binding site" evidence="1">
    <location>
        <position position="122"/>
    </location>
    <ligand>
        <name>UDP-N-acetyl-alpha-D-glucosamine</name>
        <dbReference type="ChEBI" id="CHEBI:57705"/>
    </ligand>
</feature>
<feature type="binding site" evidence="1">
    <location>
        <position position="166"/>
    </location>
    <ligand>
        <name>UDP-N-acetyl-alpha-D-glucosamine</name>
        <dbReference type="ChEBI" id="CHEBI:57705"/>
    </ligand>
</feature>
<feature type="binding site" evidence="1">
    <location>
        <position position="196"/>
    </location>
    <ligand>
        <name>UDP-N-acetyl-alpha-D-glucosamine</name>
        <dbReference type="ChEBI" id="CHEBI:57705"/>
    </ligand>
</feature>
<feature type="binding site" evidence="1">
    <location>
        <position position="301"/>
    </location>
    <ligand>
        <name>UDP-N-acetyl-alpha-D-glucosamine</name>
        <dbReference type="ChEBI" id="CHEBI:57705"/>
    </ligand>
</feature>
<accession>B8CWJ6</accession>
<sequence>MKLVFTGGGTGGHIYPALALAESFRKKGDEILYIGSNDGLERRIVPEEGFDFQGIEVAPFPRNLSVHLFSSLLKTGRGFIQARKLLRKFKPDVVIGTGGFVSGPVVLAAALQKIPTVIHEQNAYPGLANRLLAPFVTRIALNFKEADRHFKEKAREKIEITGNPIRERILTTSREEGLLNLGLRKGKKNILVFGGSQGAKNINEAMIACYRYFKNNSKLQIIHLTGMRNYQEVLQDLKEKGLDPSKYTQYKIMPYLDNMEWAYAVADLVIYRAGATGLAEITAKGIPAILIPYPYATGNHQEHNARSLEKAGAAIVIKDSELKGHKLVKLIEELINDGKRLKKMAQSSKRMGKPWARNTLINLIEDTAKGS</sequence>
<protein>
    <recommendedName>
        <fullName evidence="1">UDP-N-acetylglucosamine--N-acetylmuramyl-(pentapeptide) pyrophosphoryl-undecaprenol N-acetylglucosamine transferase</fullName>
        <ecNumber evidence="1">2.4.1.227</ecNumber>
    </recommendedName>
    <alternativeName>
        <fullName evidence="1">Undecaprenyl-PP-MurNAc-pentapeptide-UDPGlcNAc GlcNAc transferase</fullName>
    </alternativeName>
</protein>
<name>MURG_HALOH</name>
<organism>
    <name type="scientific">Halothermothrix orenii (strain H 168 / OCM 544 / DSM 9562)</name>
    <dbReference type="NCBI Taxonomy" id="373903"/>
    <lineage>
        <taxon>Bacteria</taxon>
        <taxon>Bacillati</taxon>
        <taxon>Bacillota</taxon>
        <taxon>Clostridia</taxon>
        <taxon>Halanaerobiales</taxon>
        <taxon>Halothermotrichaceae</taxon>
        <taxon>Halothermothrix</taxon>
    </lineage>
</organism>
<comment type="function">
    <text evidence="1">Cell wall formation. Catalyzes the transfer of a GlcNAc subunit on undecaprenyl-pyrophosphoryl-MurNAc-pentapeptide (lipid intermediate I) to form undecaprenyl-pyrophosphoryl-MurNAc-(pentapeptide)GlcNAc (lipid intermediate II).</text>
</comment>
<comment type="catalytic activity">
    <reaction evidence="1">
        <text>di-trans,octa-cis-undecaprenyl diphospho-N-acetyl-alpha-D-muramoyl-L-alanyl-D-glutamyl-meso-2,6-diaminopimeloyl-D-alanyl-D-alanine + UDP-N-acetyl-alpha-D-glucosamine = di-trans,octa-cis-undecaprenyl diphospho-[N-acetyl-alpha-D-glucosaminyl-(1-&gt;4)]-N-acetyl-alpha-D-muramoyl-L-alanyl-D-glutamyl-meso-2,6-diaminopimeloyl-D-alanyl-D-alanine + UDP + H(+)</text>
        <dbReference type="Rhea" id="RHEA:31227"/>
        <dbReference type="ChEBI" id="CHEBI:15378"/>
        <dbReference type="ChEBI" id="CHEBI:57705"/>
        <dbReference type="ChEBI" id="CHEBI:58223"/>
        <dbReference type="ChEBI" id="CHEBI:61387"/>
        <dbReference type="ChEBI" id="CHEBI:61388"/>
        <dbReference type="EC" id="2.4.1.227"/>
    </reaction>
</comment>
<comment type="pathway">
    <text evidence="1">Cell wall biogenesis; peptidoglycan biosynthesis.</text>
</comment>
<comment type="subcellular location">
    <subcellularLocation>
        <location evidence="1">Cell inner membrane</location>
        <topology evidence="1">Peripheral membrane protein</topology>
        <orientation evidence="1">Cytoplasmic side</orientation>
    </subcellularLocation>
</comment>
<comment type="similarity">
    <text evidence="1">Belongs to the glycosyltransferase 28 family. MurG subfamily.</text>
</comment>
<evidence type="ECO:0000255" key="1">
    <source>
        <dbReference type="HAMAP-Rule" id="MF_00033"/>
    </source>
</evidence>
<keyword id="KW-0131">Cell cycle</keyword>
<keyword id="KW-0132">Cell division</keyword>
<keyword id="KW-0997">Cell inner membrane</keyword>
<keyword id="KW-1003">Cell membrane</keyword>
<keyword id="KW-0133">Cell shape</keyword>
<keyword id="KW-0961">Cell wall biogenesis/degradation</keyword>
<keyword id="KW-0328">Glycosyltransferase</keyword>
<keyword id="KW-0472">Membrane</keyword>
<keyword id="KW-0573">Peptidoglycan synthesis</keyword>
<keyword id="KW-1185">Reference proteome</keyword>
<keyword id="KW-0808">Transferase</keyword>
<gene>
    <name evidence="1" type="primary">murG</name>
    <name type="ordered locus">Hore_09090</name>
</gene>
<dbReference type="EC" id="2.4.1.227" evidence="1"/>
<dbReference type="EMBL" id="CP001098">
    <property type="protein sequence ID" value="ACL69665.1"/>
    <property type="molecule type" value="Genomic_DNA"/>
</dbReference>
<dbReference type="RefSeq" id="WP_012635852.1">
    <property type="nucleotide sequence ID" value="NC_011899.1"/>
</dbReference>
<dbReference type="SMR" id="B8CWJ6"/>
<dbReference type="STRING" id="373903.Hore_09090"/>
<dbReference type="CAZy" id="GT28">
    <property type="family name" value="Glycosyltransferase Family 28"/>
</dbReference>
<dbReference type="KEGG" id="hor:Hore_09090"/>
<dbReference type="eggNOG" id="COG0707">
    <property type="taxonomic scope" value="Bacteria"/>
</dbReference>
<dbReference type="HOGENOM" id="CLU_037404_0_1_9"/>
<dbReference type="OrthoDB" id="9808936at2"/>
<dbReference type="UniPathway" id="UPA00219"/>
<dbReference type="Proteomes" id="UP000000719">
    <property type="component" value="Chromosome"/>
</dbReference>
<dbReference type="GO" id="GO:0005886">
    <property type="term" value="C:plasma membrane"/>
    <property type="evidence" value="ECO:0007669"/>
    <property type="project" value="UniProtKB-SubCell"/>
</dbReference>
<dbReference type="GO" id="GO:0051991">
    <property type="term" value="F:UDP-N-acetyl-D-glucosamine:N-acetylmuramoyl-L-alanyl-D-glutamyl-meso-2,6-diaminopimelyl-D-alanyl-D-alanine-diphosphoundecaprenol 4-beta-N-acetylglucosaminlytransferase activity"/>
    <property type="evidence" value="ECO:0007669"/>
    <property type="project" value="RHEA"/>
</dbReference>
<dbReference type="GO" id="GO:0050511">
    <property type="term" value="F:undecaprenyldiphospho-muramoylpentapeptide beta-N-acetylglucosaminyltransferase activity"/>
    <property type="evidence" value="ECO:0007669"/>
    <property type="project" value="UniProtKB-UniRule"/>
</dbReference>
<dbReference type="GO" id="GO:0005975">
    <property type="term" value="P:carbohydrate metabolic process"/>
    <property type="evidence" value="ECO:0007669"/>
    <property type="project" value="InterPro"/>
</dbReference>
<dbReference type="GO" id="GO:0051301">
    <property type="term" value="P:cell division"/>
    <property type="evidence" value="ECO:0007669"/>
    <property type="project" value="UniProtKB-KW"/>
</dbReference>
<dbReference type="GO" id="GO:0071555">
    <property type="term" value="P:cell wall organization"/>
    <property type="evidence" value="ECO:0007669"/>
    <property type="project" value="UniProtKB-KW"/>
</dbReference>
<dbReference type="GO" id="GO:0030259">
    <property type="term" value="P:lipid glycosylation"/>
    <property type="evidence" value="ECO:0007669"/>
    <property type="project" value="UniProtKB-UniRule"/>
</dbReference>
<dbReference type="GO" id="GO:0009252">
    <property type="term" value="P:peptidoglycan biosynthetic process"/>
    <property type="evidence" value="ECO:0007669"/>
    <property type="project" value="UniProtKB-UniRule"/>
</dbReference>
<dbReference type="GO" id="GO:0008360">
    <property type="term" value="P:regulation of cell shape"/>
    <property type="evidence" value="ECO:0007669"/>
    <property type="project" value="UniProtKB-KW"/>
</dbReference>
<dbReference type="CDD" id="cd03785">
    <property type="entry name" value="GT28_MurG"/>
    <property type="match status" value="1"/>
</dbReference>
<dbReference type="Gene3D" id="3.40.50.2000">
    <property type="entry name" value="Glycogen Phosphorylase B"/>
    <property type="match status" value="2"/>
</dbReference>
<dbReference type="HAMAP" id="MF_00033">
    <property type="entry name" value="MurG"/>
    <property type="match status" value="1"/>
</dbReference>
<dbReference type="InterPro" id="IPR006009">
    <property type="entry name" value="GlcNAc_MurG"/>
</dbReference>
<dbReference type="InterPro" id="IPR007235">
    <property type="entry name" value="Glyco_trans_28_C"/>
</dbReference>
<dbReference type="InterPro" id="IPR004276">
    <property type="entry name" value="GlycoTrans_28_N"/>
</dbReference>
<dbReference type="NCBIfam" id="TIGR01133">
    <property type="entry name" value="murG"/>
    <property type="match status" value="1"/>
</dbReference>
<dbReference type="PANTHER" id="PTHR21015:SF22">
    <property type="entry name" value="GLYCOSYLTRANSFERASE"/>
    <property type="match status" value="1"/>
</dbReference>
<dbReference type="PANTHER" id="PTHR21015">
    <property type="entry name" value="UDP-N-ACETYLGLUCOSAMINE--N-ACETYLMURAMYL-(PENTAPEPTIDE) PYROPHOSPHORYL-UNDECAPRENOL N-ACETYLGLUCOSAMINE TRANSFERASE 1"/>
    <property type="match status" value="1"/>
</dbReference>
<dbReference type="Pfam" id="PF04101">
    <property type="entry name" value="Glyco_tran_28_C"/>
    <property type="match status" value="1"/>
</dbReference>
<dbReference type="Pfam" id="PF03033">
    <property type="entry name" value="Glyco_transf_28"/>
    <property type="match status" value="1"/>
</dbReference>
<dbReference type="SUPFAM" id="SSF53756">
    <property type="entry name" value="UDP-Glycosyltransferase/glycogen phosphorylase"/>
    <property type="match status" value="1"/>
</dbReference>